<proteinExistence type="evidence at transcript level"/>
<organism evidence="10">
    <name type="scientific">Arabidopsis thaliana</name>
    <name type="common">Mouse-ear cress</name>
    <dbReference type="NCBI Taxonomy" id="3702"/>
    <lineage>
        <taxon>Eukaryota</taxon>
        <taxon>Viridiplantae</taxon>
        <taxon>Streptophyta</taxon>
        <taxon>Embryophyta</taxon>
        <taxon>Tracheophyta</taxon>
        <taxon>Spermatophyta</taxon>
        <taxon>Magnoliopsida</taxon>
        <taxon>eudicotyledons</taxon>
        <taxon>Gunneridae</taxon>
        <taxon>Pentapetalae</taxon>
        <taxon>rosids</taxon>
        <taxon>malvids</taxon>
        <taxon>Brassicales</taxon>
        <taxon>Brassicaceae</taxon>
        <taxon>Camelineae</taxon>
        <taxon>Arabidopsis</taxon>
    </lineage>
</organism>
<accession>Q0V842</accession>
<accession>Q9FLJ5</accession>
<evidence type="ECO:0000250" key="1">
    <source>
        <dbReference type="UniProtKB" id="Q682U6"/>
    </source>
</evidence>
<evidence type="ECO:0000250" key="2">
    <source>
        <dbReference type="UniProtKB" id="Q91XB0"/>
    </source>
</evidence>
<evidence type="ECO:0000255" key="3"/>
<evidence type="ECO:0000256" key="4">
    <source>
        <dbReference type="SAM" id="MobiDB-lite"/>
    </source>
</evidence>
<evidence type="ECO:0000269" key="5">
    <source>
    </source>
</evidence>
<evidence type="ECO:0000303" key="6">
    <source>
    </source>
</evidence>
<evidence type="ECO:0000305" key="7"/>
<evidence type="ECO:0000305" key="8">
    <source>
    </source>
</evidence>
<evidence type="ECO:0000312" key="9">
    <source>
        <dbReference type="Araport" id="AT5G61390"/>
    </source>
</evidence>
<evidence type="ECO:0000312" key="10">
    <source>
        <dbReference type="EMBL" id="ABH04485.1"/>
    </source>
</evidence>
<evidence type="ECO:0000312" key="11">
    <source>
        <dbReference type="EMBL" id="BAB08494.1"/>
    </source>
</evidence>
<evidence type="ECO:0000312" key="12">
    <source>
        <dbReference type="Proteomes" id="UP000006548"/>
    </source>
</evidence>
<reference key="1">
    <citation type="journal article" date="1998" name="DNA Res.">
        <title>Structural analysis of Arabidopsis thaliana chromosome 5. IV. Sequence features of the regions of 1,456,315 bp covered by nineteen physically assigned P1 and TAC clones.</title>
        <authorList>
            <person name="Sato S."/>
            <person name="Kaneko T."/>
            <person name="Kotani H."/>
            <person name="Nakamura Y."/>
            <person name="Asamizu E."/>
            <person name="Miyajima N."/>
            <person name="Tabata S."/>
        </authorList>
    </citation>
    <scope>NUCLEOTIDE SEQUENCE [LARGE SCALE GENOMIC DNA]</scope>
    <source>
        <strain evidence="12">cv. Columbia</strain>
    </source>
</reference>
<reference key="2">
    <citation type="journal article" date="2017" name="Plant J.">
        <title>Araport11: a complete reannotation of the Arabidopsis thaliana reference genome.</title>
        <authorList>
            <person name="Cheng C.Y."/>
            <person name="Krishnakumar V."/>
            <person name="Chan A.P."/>
            <person name="Thibaud-Nissen F."/>
            <person name="Schobel S."/>
            <person name="Town C.D."/>
        </authorList>
    </citation>
    <scope>GENOME REANNOTATION</scope>
    <source>
        <strain>cv. Columbia</strain>
    </source>
</reference>
<reference key="3">
    <citation type="submission" date="2006-08" db="EMBL/GenBank/DDBJ databases">
        <title>Arabidopsis ORF Clones.</title>
        <authorList>
            <person name="Quinitio C."/>
            <person name="Chen H."/>
            <person name="Kim C.J."/>
            <person name="Shinn P."/>
            <person name="Ecker J.R."/>
        </authorList>
    </citation>
    <scope>NUCLEOTIDE SEQUENCE [LARGE SCALE MRNA]</scope>
    <source>
        <strain>cv. Columbia</strain>
    </source>
</reference>
<reference key="4">
    <citation type="journal article" date="2014" name="Science">
        <title>Plant development. Arabidopsis NAC45/86 direct sieve element morphogenesis culminating in enucleation.</title>
        <authorList>
            <person name="Furuta K.M."/>
            <person name="Yadav S.R."/>
            <person name="Lehesranta S."/>
            <person name="Belevich I."/>
            <person name="Miyashima S."/>
            <person name="Heo J.O."/>
            <person name="Vaten A."/>
            <person name="Lindgren O."/>
            <person name="De Rybel B."/>
            <person name="Van Isterdael G."/>
            <person name="Somervuo P."/>
            <person name="Lichtenberger R."/>
            <person name="Rocha R."/>
            <person name="Thitamadee S."/>
            <person name="Taehtiharju S."/>
            <person name="Auvinen P."/>
            <person name="Beeckman T."/>
            <person name="Jokitalo E."/>
            <person name="Helariutta Y."/>
        </authorList>
    </citation>
    <scope>FUNCTION</scope>
    <scope>SUBCELLULAR LOCATION</scope>
    <scope>TISSUE SPECIFICITY</scope>
    <scope>INDUCTION BY NAC045 AND NAC086</scope>
</reference>
<keyword id="KW-0963">Cytoplasm</keyword>
<keyword id="KW-0269">Exonuclease</keyword>
<keyword id="KW-0378">Hydrolase</keyword>
<keyword id="KW-0460">Magnesium</keyword>
<keyword id="KW-0479">Metal-binding</keyword>
<keyword id="KW-0540">Nuclease</keyword>
<keyword id="KW-0539">Nucleus</keyword>
<keyword id="KW-1185">Reference proteome</keyword>
<dbReference type="EC" id="3.1.11.-"/>
<dbReference type="EMBL" id="AB010073">
    <property type="protein sequence ID" value="BAB08494.1"/>
    <property type="status" value="ALT_SEQ"/>
    <property type="molecule type" value="Genomic_DNA"/>
</dbReference>
<dbReference type="EMBL" id="CP002688">
    <property type="protein sequence ID" value="AED97461.1"/>
    <property type="molecule type" value="Genomic_DNA"/>
</dbReference>
<dbReference type="EMBL" id="BT026378">
    <property type="protein sequence ID" value="ABH04485.1"/>
    <property type="molecule type" value="mRNA"/>
</dbReference>
<dbReference type="RefSeq" id="NP_200947.3">
    <property type="nucleotide sequence ID" value="NM_125532.4"/>
</dbReference>
<dbReference type="SMR" id="Q0V842"/>
<dbReference type="FunCoup" id="Q0V842">
    <property type="interactions" value="950"/>
</dbReference>
<dbReference type="STRING" id="3702.Q0V842"/>
<dbReference type="iPTMnet" id="Q0V842"/>
<dbReference type="PaxDb" id="3702-AT5G61390.1"/>
<dbReference type="ProteomicsDB" id="251188"/>
<dbReference type="EnsemblPlants" id="AT5G61390.1">
    <property type="protein sequence ID" value="AT5G61390.1"/>
    <property type="gene ID" value="AT5G61390"/>
</dbReference>
<dbReference type="GeneID" id="836260"/>
<dbReference type="Gramene" id="AT5G61390.1">
    <property type="protein sequence ID" value="AT5G61390.1"/>
    <property type="gene ID" value="AT5G61390"/>
</dbReference>
<dbReference type="KEGG" id="ath:AT5G61390"/>
<dbReference type="Araport" id="AT5G61390"/>
<dbReference type="TAIR" id="AT5G61390">
    <property type="gene designation" value="NEN2"/>
</dbReference>
<dbReference type="eggNOG" id="ENOG502QPPQ">
    <property type="taxonomic scope" value="Eukaryota"/>
</dbReference>
<dbReference type="HOGENOM" id="CLU_030072_0_0_1"/>
<dbReference type="InParanoid" id="Q0V842"/>
<dbReference type="OMA" id="YDYQQIA"/>
<dbReference type="PhylomeDB" id="Q0V842"/>
<dbReference type="PRO" id="PR:Q0V842"/>
<dbReference type="Proteomes" id="UP000006548">
    <property type="component" value="Chromosome 5"/>
</dbReference>
<dbReference type="ExpressionAtlas" id="Q0V842">
    <property type="expression patterns" value="baseline and differential"/>
</dbReference>
<dbReference type="GO" id="GO:0005737">
    <property type="term" value="C:cytoplasm"/>
    <property type="evidence" value="ECO:0007669"/>
    <property type="project" value="UniProtKB-SubCell"/>
</dbReference>
<dbReference type="GO" id="GO:0005634">
    <property type="term" value="C:nucleus"/>
    <property type="evidence" value="ECO:0007669"/>
    <property type="project" value="UniProtKB-SubCell"/>
</dbReference>
<dbReference type="GO" id="GO:0004527">
    <property type="term" value="F:exonuclease activity"/>
    <property type="evidence" value="ECO:0007669"/>
    <property type="project" value="UniProtKB-KW"/>
</dbReference>
<dbReference type="GO" id="GO:0046872">
    <property type="term" value="F:metal ion binding"/>
    <property type="evidence" value="ECO:0007669"/>
    <property type="project" value="UniProtKB-KW"/>
</dbReference>
<dbReference type="GO" id="GO:0003676">
    <property type="term" value="F:nucleic acid binding"/>
    <property type="evidence" value="ECO:0007669"/>
    <property type="project" value="InterPro"/>
</dbReference>
<dbReference type="CDD" id="cd06127">
    <property type="entry name" value="DEDDh"/>
    <property type="match status" value="1"/>
</dbReference>
<dbReference type="FunFam" id="3.30.420.10:FF:000040">
    <property type="entry name" value="Exonuclease family protein"/>
    <property type="match status" value="1"/>
</dbReference>
<dbReference type="Gene3D" id="3.30.420.10">
    <property type="entry name" value="Ribonuclease H-like superfamily/Ribonuclease H"/>
    <property type="match status" value="1"/>
</dbReference>
<dbReference type="InterPro" id="IPR013520">
    <property type="entry name" value="Exonuclease_RNaseT/DNA_pol3"/>
</dbReference>
<dbReference type="InterPro" id="IPR012337">
    <property type="entry name" value="RNaseH-like_sf"/>
</dbReference>
<dbReference type="InterPro" id="IPR036397">
    <property type="entry name" value="RNaseH_sf"/>
</dbReference>
<dbReference type="PANTHER" id="PTHR30231">
    <property type="entry name" value="DNA POLYMERASE III SUBUNIT EPSILON"/>
    <property type="match status" value="1"/>
</dbReference>
<dbReference type="PANTHER" id="PTHR30231:SF4">
    <property type="entry name" value="PROTEIN NEN2"/>
    <property type="match status" value="1"/>
</dbReference>
<dbReference type="Pfam" id="PF00929">
    <property type="entry name" value="RNase_T"/>
    <property type="match status" value="1"/>
</dbReference>
<dbReference type="SMART" id="SM00479">
    <property type="entry name" value="EXOIII"/>
    <property type="match status" value="1"/>
</dbReference>
<dbReference type="SUPFAM" id="SSF53098">
    <property type="entry name" value="Ribonuclease H-like"/>
    <property type="match status" value="1"/>
</dbReference>
<feature type="chain" id="PRO_0000430889" description="Protein NEN2">
    <location>
        <begin position="1"/>
        <end position="487"/>
    </location>
</feature>
<feature type="domain" description="Exonuclease" evidence="3">
    <location>
        <begin position="18"/>
        <end position="179"/>
    </location>
</feature>
<feature type="region of interest" description="Disordered" evidence="4">
    <location>
        <begin position="200"/>
        <end position="233"/>
    </location>
</feature>
<feature type="region of interest" description="Disordered" evidence="4">
    <location>
        <begin position="269"/>
        <end position="291"/>
    </location>
</feature>
<feature type="compositionally biased region" description="Polar residues" evidence="4">
    <location>
        <begin position="221"/>
        <end position="233"/>
    </location>
</feature>
<feature type="active site" description="Proton donor/acceptor" evidence="2">
    <location>
        <position position="167"/>
    </location>
</feature>
<feature type="binding site" evidence="2">
    <location>
        <position position="20"/>
    </location>
    <ligand>
        <name>Mg(2+)</name>
        <dbReference type="ChEBI" id="CHEBI:18420"/>
        <label>1</label>
    </ligand>
</feature>
<feature type="binding site" evidence="2">
    <location>
        <position position="20"/>
    </location>
    <ligand>
        <name>Mg(2+)</name>
        <dbReference type="ChEBI" id="CHEBI:18420"/>
        <label>2</label>
    </ligand>
</feature>
<feature type="binding site" evidence="2">
    <location>
        <position position="22"/>
    </location>
    <ligand>
        <name>Mg(2+)</name>
        <dbReference type="ChEBI" id="CHEBI:18420"/>
        <label>1</label>
    </ligand>
</feature>
<feature type="binding site" evidence="2">
    <location>
        <position position="172"/>
    </location>
    <ligand>
        <name>Mg(2+)</name>
        <dbReference type="ChEBI" id="CHEBI:18420"/>
        <label>1</label>
    </ligand>
</feature>
<protein>
    <recommendedName>
        <fullName evidence="6">Protein NEN2</fullName>
    </recommendedName>
    <alternativeName>
        <fullName evidence="6">NAC45/NAC86-dependent exonuclease-domain protein 2</fullName>
        <ecNumber>3.1.11.-</ecNumber>
    </alternativeName>
</protein>
<name>NEN2_ARATH</name>
<comment type="function">
    <text evidence="8">Probable exonuclease involved in enuclation of sieve elements.</text>
</comment>
<comment type="cofactor">
    <cofactor evidence="1">
        <name>Mg(2+)</name>
        <dbReference type="ChEBI" id="CHEBI:18420"/>
    </cofactor>
</comment>
<comment type="subcellular location">
    <subcellularLocation>
        <location evidence="5">Cytoplasm</location>
    </subcellularLocation>
    <subcellularLocation>
        <location evidence="5">Nucleus</location>
    </subcellularLocation>
    <text evidence="5">Moves from the cytoplasm to the nucleus during enuclation.</text>
</comment>
<comment type="tissue specificity">
    <text evidence="5">Expressed in the sieve elements and phloem pole pericycle cells.</text>
</comment>
<comment type="induction">
    <text evidence="5">Regulated both transcriptionally and post-translationally by the transcription factors NAC045 and NAC086.</text>
</comment>
<comment type="sequence caution" evidence="7">
    <conflict type="erroneous gene model prediction">
        <sequence resource="EMBL-CDS" id="BAB08494"/>
    </conflict>
</comment>
<sequence length="487" mass="54320">MLTMVGLTPAEDRSEIAFFDVETTIPFRVGQGYAILEFGSILVCPKKLVELKNYSVLVRPANLNLITPRSVKCNGIKREDVESALTFADIADTVYDILHGRIWAGHNILKFDCPRIREAFAEIGRDPPEPKGTIDSLALLTQRFGRRAGDMKMATLATYFGLGNQTHRSLDDVRMNFEVLKYCATVLFLESSLPDELIENSVTTTTPETSSRRRRTIKKSPLQSPTDQQTGENMTTIPILSFVSSAEAQTDPFDMSTLRNEIAPEVLQSDVPMEEEQNQQSETVASEGTGDQEGFMELDKISVSSIRATHVPLYDGSQTMKLQLFLGDRPLQLHCPRLKVRFGINGKFMDKAGRRRLNFVIDLYPSLCNVLQECDSAAQTISVDSGSGSDWNPLVIPMKGFLNCPTARIHIPTELNGDIDRYAAEIHQKEFSGATATQKLISSNPKAEEIESLLNPRTVLDAFLSLEPYDYQQRAGIRLVARKLVIH</sequence>
<gene>
    <name evidence="6" type="primary">NEN2</name>
    <name evidence="9" type="ordered locus">At5g61390</name>
    <name evidence="11" type="ORF">MFB13.17</name>
</gene>